<accession>P05982</accession>
<accession>Q63478</accession>
<reference key="1">
    <citation type="journal article" date="1986" name="J. Biol. Chem.">
        <title>NAD(P)H:menadione oxidoreductase. Novel purification of enzyme cDNA and complete amino acid sequence, and gene regulation.</title>
        <authorList>
            <person name="Robertson J.A."/>
            <person name="Chen H.-C."/>
            <person name="Nebert D.W."/>
        </authorList>
    </citation>
    <scope>NUCLEOTIDE SEQUENCE [MRNA]</scope>
    <source>
        <tissue>Liver</tissue>
    </source>
</reference>
<reference key="2">
    <citation type="journal article" date="1987" name="Chem. Scr.">
        <title>Autoregulation plus positive and negative elements controlling transcription of genes in the [Ah] battery.</title>
        <authorList>
            <person name="Robertson J.A."/>
            <person name="Nebert D.W."/>
            <person name="Hankinson O."/>
        </authorList>
    </citation>
    <scope>NUCLEOTIDE SEQUENCE</scope>
</reference>
<reference key="3">
    <citation type="journal article" date="1987" name="J. Biol. Chem.">
        <title>Rat liver NAD(P)H: quinone reductase nucleotide sequence analysis of a quinone reductase cDNA clone and prediction of the amino acid sequence of the corresponding protein.</title>
        <authorList>
            <person name="Bayney R.M."/>
            <person name="Rodkey J.A."/>
            <person name="Bennett C.D."/>
            <person name="Lu A.Y.H."/>
            <person name="Pickett C.B."/>
        </authorList>
    </citation>
    <scope>NUCLEOTIDE SEQUENCE [MRNA]</scope>
    <scope>PARTIAL PROTEIN SEQUENCE</scope>
    <source>
        <tissue>Liver</tissue>
    </source>
</reference>
<reference key="4">
    <citation type="journal article" date="1989" name="J. Biol. Chem.">
        <title>Rat liver NAD(P)H:quinone reductase. Regulation of quinone reductase gene expression by planar aromatic compounds and determination of the exon structure of the quinone reductase structural gene.</title>
        <authorList>
            <person name="Bayney R.M."/>
            <person name="Morton M.R."/>
            <person name="Favreau L.V."/>
            <person name="Pickett C.B."/>
        </authorList>
    </citation>
    <scope>NUCLEOTIDE SEQUENCE</scope>
    <source>
        <tissue>Liver</tissue>
    </source>
</reference>
<reference key="5">
    <citation type="journal article" date="2004" name="Genome Res.">
        <title>The status, quality, and expansion of the NIH full-length cDNA project: the Mammalian Gene Collection (MGC).</title>
        <authorList>
            <consortium name="The MGC Project Team"/>
        </authorList>
    </citation>
    <scope>NUCLEOTIDE SEQUENCE [LARGE SCALE MRNA]</scope>
    <source>
        <tissue>Heart</tissue>
    </source>
</reference>
<reference key="6">
    <citation type="journal article" date="1988" name="Biochemistry">
        <title>Structure-function relationship of NAD(P)H:quinone reductase: characterization of NH2-terminal blocking group and essential tyrosine and lysine residues.</title>
        <authorList>
            <person name="Haniu M."/>
            <person name="Yuan H."/>
            <person name="Chen S.A."/>
            <person name="Iyanagi T."/>
            <person name="Lee T.D."/>
            <person name="Shively J.E."/>
        </authorList>
    </citation>
    <scope>PROTEIN SEQUENCE OF 2-274</scope>
    <scope>CLEAVAGE OF INITIATOR METHIONINE</scope>
    <scope>ACETYLATION AT ALA-2</scope>
</reference>
<reference key="7">
    <citation type="journal article" date="1988" name="Arch. Biochem. Biophys.">
        <title>Rat liver NAD(P)H:quinone reductase: isolation of a quinone reductase structural gene and prediction of the NH2 terminal sequence of the protein by double-stranded sequencing of exons 1 and 2.</title>
        <authorList>
            <person name="Bayney R.M."/>
            <person name="Pickett C.B."/>
        </authorList>
    </citation>
    <scope>NUCLEOTIDE SEQUENCE OF 1-57</scope>
</reference>
<reference key="8">
    <citation type="journal article" date="1990" name="Arch. Biochem. Biophys.">
        <title>Expression of mammalian DT-diaphorase in Escherichia coli: purification and characterization of the expressed protein.</title>
        <authorList>
            <person name="Ma Q."/>
            <person name="Wang R."/>
            <person name="Yang C.S."/>
            <person name="Lu A.Y.H."/>
        </authorList>
    </citation>
    <scope>PROTEIN SEQUENCE OF 2-21</scope>
    <scope>FUNCTION</scope>
    <scope>COFACTOR</scope>
    <scope>SUBCELLULAR LOCATION</scope>
    <scope>CATALYTIC ACTIVITY</scope>
</reference>
<reference key="9">
    <citation type="journal article" date="1988" name="Biochem. Pharmacol.">
        <title>The nitroreductase enzyme in Walker cells that activates 5-(aziridin-1-yl)-2,4-dinitrobenzamide (CB 1954) to 5-(aziridin-1-yl)-4-hydroxylamino-2-nitrobenzamide is a form of NAD(P)H dehydrogenase (quinone) (EC 1.6.99.2).</title>
        <authorList>
            <person name="Knox R.J."/>
            <person name="Boland M.P."/>
            <person name="Friedlos F."/>
            <person name="Coles B."/>
            <person name="Southan C."/>
            <person name="Roberts J.J."/>
        </authorList>
    </citation>
    <scope>PROTEIN SEQUENCE OF 24-131 AND 156-270</scope>
</reference>
<reference key="10">
    <citation type="journal article" date="1989" name="Cancer Res.">
        <title>Transcriptional down-regulation of a rat gene, WDNM2, in metastatic DMBA-8 cells.</title>
        <authorList>
            <person name="Dear T.N."/>
            <person name="McDonald D.A."/>
            <person name="Kefford R.F."/>
        </authorList>
    </citation>
    <scope>NUCLEOTIDE SEQUENCE OF 80-274</scope>
</reference>
<reference key="11">
    <citation type="journal article" date="1989" name="Mol. Pharmacol.">
        <title>Reaction of rat liver DT-diaphorase (NAD(P)H:quinone acceptor reductase) with 5'-[p-(fluorosulfonyl)benzoyl]-adenosine.</title>
        <authorList>
            <person name="Liu X.F."/>
            <person name="Yuan H."/>
            <person name="Haniu M."/>
            <person name="Iyanagi T."/>
            <person name="Shively J.E."/>
            <person name="Chen S.A."/>
        </authorList>
    </citation>
    <scope>PROTEIN SEQUENCE OF 147-156 AND 263-271</scope>
</reference>
<reference key="12">
    <citation type="journal article" date="1990" name="Biochem. Biophys. Res. Commun.">
        <title>Rat liver NAD(P)H:quinone oxidoreductase: cDNA expression and site-directed mutagenesis.</title>
        <authorList>
            <person name="Forrest G.L."/>
            <person name="Qian J."/>
            <person name="Ma J.-X."/>
            <person name="Kaplan W.D."/>
            <person name="Akman S."/>
            <person name="Doroshow J."/>
            <person name="Chen S.A."/>
        </authorList>
    </citation>
    <scope>MUTAGENESIS OF 117-PHE--GLU-118; VAL-161 AND ASP-164</scope>
</reference>
<reference key="13">
    <citation type="journal article" date="1995" name="Proc. Natl. Acad. Sci. U.S.A.">
        <title>Subunit functional studies of NAD(P)H:quinone oxidoreductase with a heterodimer approach.</title>
        <authorList>
            <person name="Cui K."/>
            <person name="Lu A.Y."/>
            <person name="Yang C.S."/>
        </authorList>
    </citation>
    <scope>FUNCTION</scope>
    <scope>CATALYTIC ACTIVITY</scope>
    <scope>BIOPHYSICOCHEMICAL PROPERTIES</scope>
    <scope>MUTAGENESIS OF HIS-195</scope>
</reference>
<reference key="14">
    <citation type="journal article" date="1997" name="J. Biol. Chem.">
        <title>Molecular basis of the catalytic differences among DT-diaphorase of human, rat, and mouse.</title>
        <authorList>
            <person name="Chen S."/>
            <person name="Knox R."/>
            <person name="Wu K."/>
            <person name="Deng P.S."/>
            <person name="Zhou D."/>
            <person name="Bianchet M.A."/>
            <person name="Amzel L.M."/>
        </authorList>
    </citation>
    <scope>FUNCTION</scope>
    <scope>CATALYTIC ACTIVITY</scope>
    <scope>BIOPHYSICOCHEMICAL PROPERTIES</scope>
    <scope>MUTAGENESIS OF TYR-105; THR-131; VAL-204; SER-219 AND LEU-239</scope>
</reference>
<reference key="15">
    <citation type="journal article" date="1995" name="Proc. Natl. Acad. Sci. U.S.A.">
        <title>The three-dimensional structure of NAD(P)H:quinone reductase, a flavoprotein involved in cancer chemoprotection and chemotherapy: mechanism of the two-electron reduction.</title>
        <authorList>
            <person name="Li R."/>
            <person name="Bianchet M.A."/>
            <person name="Talalay P."/>
            <person name="Amzel L.M."/>
        </authorList>
    </citation>
    <scope>X-RAY CRYSTALLOGRAPHY (2.4 ANGSTROMS) IN COMPLEX WITH FAD AND DUROQUINONE</scope>
    <scope>SUBUNIT</scope>
    <source>
        <tissue>Liver</tissue>
    </source>
</reference>
<reference key="16">
    <citation type="journal article" date="1995" name="Proc. Natl. Acad. Sci. U.S.A.">
        <authorList>
            <person name="Li R."/>
            <person name="Bianchet M.A."/>
            <person name="Talalay P."/>
            <person name="Amzel L.M."/>
        </authorList>
    </citation>
    <scope>ERRATUM OF PUBMED:7568029</scope>
</reference>
<sequence>MAVRRALIVLAHAERTSFNYAMKEAAVEALKKKGWEVVESDLYAMNFNPLISRNDITGEPKDSENFQYPVESSLAYKEGRLSPDIVAEQKKLEAADLVIFQFPLYWFGVPAILKGWFERVLVAGFAYTYATMYDKGPFQNKKTLLSITTGGSGSMYSLQGVHGDMNVILWPIQSGILRFCGFQVLEPQLVYSIGHTPPDARVQVLEGWKKRLETVWEESPLYFAPSSLFDLNFQAGFLLKKEVQEEQKKNKFGLSVGHHLGKSIPADNQIKARK</sequence>
<proteinExistence type="evidence at protein level"/>
<evidence type="ECO:0000250" key="1"/>
<evidence type="ECO:0000250" key="2">
    <source>
        <dbReference type="UniProtKB" id="P15559"/>
    </source>
</evidence>
<evidence type="ECO:0000269" key="3">
    <source>
    </source>
</evidence>
<evidence type="ECO:0000269" key="4">
    <source>
    </source>
</evidence>
<evidence type="ECO:0000269" key="5">
    <source>
    </source>
</evidence>
<evidence type="ECO:0000269" key="6">
    <source>
    </source>
</evidence>
<evidence type="ECO:0000269" key="7">
    <source>
    </source>
</evidence>
<evidence type="ECO:0000269" key="8">
    <source>
    </source>
</evidence>
<evidence type="ECO:0000303" key="9">
    <source>
    </source>
</evidence>
<evidence type="ECO:0000303" key="10">
    <source>
    </source>
</evidence>
<evidence type="ECO:0000305" key="11"/>
<evidence type="ECO:0000305" key="12">
    <source>
    </source>
</evidence>
<evidence type="ECO:0000305" key="13">
    <source>
    </source>
</evidence>
<evidence type="ECO:0000305" key="14">
    <source>
    </source>
</evidence>
<evidence type="ECO:0007829" key="15">
    <source>
        <dbReference type="PDB" id="1QRD"/>
    </source>
</evidence>
<name>NQO1_RAT</name>
<protein>
    <recommendedName>
        <fullName>NAD(P)H dehydrogenase [quinone] 1</fullName>
        <ecNumber evidence="3 7 8">1.6.5.2</ecNumber>
    </recommendedName>
    <alternativeName>
        <fullName>Azoreductase</fullName>
    </alternativeName>
    <alternativeName>
        <fullName evidence="10">DT-diaphorase</fullName>
        <shortName>DTD</shortName>
    </alternativeName>
    <alternativeName>
        <fullName>Menadione reductase</fullName>
    </alternativeName>
    <alternativeName>
        <fullName evidence="9">NAD(P)H:quinone oxidoreductase 1</fullName>
    </alternativeName>
    <alternativeName>
        <fullName>Phylloquinone reductase</fullName>
    </alternativeName>
    <alternativeName>
        <fullName>Quinone reductase 1</fullName>
        <shortName>QR1</shortName>
    </alternativeName>
</protein>
<organism>
    <name type="scientific">Rattus norvegicus</name>
    <name type="common">Rat</name>
    <dbReference type="NCBI Taxonomy" id="10116"/>
    <lineage>
        <taxon>Eukaryota</taxon>
        <taxon>Metazoa</taxon>
        <taxon>Chordata</taxon>
        <taxon>Craniata</taxon>
        <taxon>Vertebrata</taxon>
        <taxon>Euteleostomi</taxon>
        <taxon>Mammalia</taxon>
        <taxon>Eutheria</taxon>
        <taxon>Euarchontoglires</taxon>
        <taxon>Glires</taxon>
        <taxon>Rodentia</taxon>
        <taxon>Myomorpha</taxon>
        <taxon>Muroidea</taxon>
        <taxon>Muridae</taxon>
        <taxon>Murinae</taxon>
        <taxon>Rattus</taxon>
    </lineage>
</organism>
<keyword id="KW-0002">3D-structure</keyword>
<keyword id="KW-0007">Acetylation</keyword>
<keyword id="KW-0963">Cytoplasm</keyword>
<keyword id="KW-0903">Direct protein sequencing</keyword>
<keyword id="KW-0274">FAD</keyword>
<keyword id="KW-0285">Flavoprotein</keyword>
<keyword id="KW-1017">Isopeptide bond</keyword>
<keyword id="KW-0520">NAD</keyword>
<keyword id="KW-0521">NADP</keyword>
<keyword id="KW-0560">Oxidoreductase</keyword>
<keyword id="KW-0597">Phosphoprotein</keyword>
<keyword id="KW-1185">Reference proteome</keyword>
<keyword id="KW-0832">Ubl conjugation</keyword>
<gene>
    <name type="primary">Nqo1</name>
    <name type="synonym">Nmor1</name>
</gene>
<comment type="function">
    <text evidence="2 3 7 8">Flavin-containing quinone reductase that catalyzes two-electron reduction of quinones to hydroquinones using either NADH or NADPH as electron donors. In a ping-pong kinetic mechanism, the electrons are sequentially transferred from NAD(P)H to flavin cofactor and then from reduced flavin to the quinone, bypassing the formation of semiquinone and reactive oxygen species (PubMed:1703398, PubMed:7862630, PubMed:8999809). Regulates cellular redox state primarily through quinone detoxification. Reduces components of plasma membrane redox system such as coenzyme Q and vitamin quinones, producing antioxidant hydroquinone forms. In the process may function as superoxide scavenger to prevent hydroquinone oxidation and facilitate excretion (By similarity). Alternatively, can activate quinones and their derivatives by generating redox reactive hydroquinones with DNA cross-linking antitumor potential (By similarity). Acts as a gatekeeper of the core 20S proteasome known to degrade proteins with unstructured regions. Upon oxidative stress, interacts with tumor suppressors TP53 and TP73 in a NADH-dependent way and inhibits their ubiquitin-independent degradation by the 20S proteasome (By similarity).</text>
</comment>
<comment type="catalytic activity">
    <reaction evidence="3 7 8">
        <text>a quinone + NADH + H(+) = a quinol + NAD(+)</text>
        <dbReference type="Rhea" id="RHEA:46160"/>
        <dbReference type="ChEBI" id="CHEBI:15378"/>
        <dbReference type="ChEBI" id="CHEBI:24646"/>
        <dbReference type="ChEBI" id="CHEBI:57540"/>
        <dbReference type="ChEBI" id="CHEBI:57945"/>
        <dbReference type="ChEBI" id="CHEBI:132124"/>
        <dbReference type="EC" id="1.6.5.2"/>
    </reaction>
    <physiologicalReaction direction="left-to-right" evidence="12 13 14">
        <dbReference type="Rhea" id="RHEA:46161"/>
    </physiologicalReaction>
</comment>
<comment type="catalytic activity">
    <reaction evidence="3 7">
        <text>a quinone + NADPH + H(+) = a quinol + NADP(+)</text>
        <dbReference type="Rhea" id="RHEA:46164"/>
        <dbReference type="ChEBI" id="CHEBI:15378"/>
        <dbReference type="ChEBI" id="CHEBI:24646"/>
        <dbReference type="ChEBI" id="CHEBI:57783"/>
        <dbReference type="ChEBI" id="CHEBI:58349"/>
        <dbReference type="ChEBI" id="CHEBI:132124"/>
        <dbReference type="EC" id="1.6.5.2"/>
    </reaction>
    <physiologicalReaction direction="left-to-right" evidence="12 13">
        <dbReference type="Rhea" id="RHEA:46165"/>
    </physiologicalReaction>
</comment>
<comment type="catalytic activity">
    <reaction evidence="2">
        <text>ubiquinone-10 + NADH + H(+) = ubiquinol-10 + NAD(+)</text>
        <dbReference type="Rhea" id="RHEA:61984"/>
        <dbReference type="ChEBI" id="CHEBI:15378"/>
        <dbReference type="ChEBI" id="CHEBI:46245"/>
        <dbReference type="ChEBI" id="CHEBI:57540"/>
        <dbReference type="ChEBI" id="CHEBI:57945"/>
        <dbReference type="ChEBI" id="CHEBI:64183"/>
    </reaction>
    <physiologicalReaction direction="left-to-right" evidence="2">
        <dbReference type="Rhea" id="RHEA:61985"/>
    </physiologicalReaction>
</comment>
<comment type="catalytic activity">
    <reaction evidence="8">
        <text>menadione + NADH + H(+) = menadiol + NAD(+)</text>
        <dbReference type="Rhea" id="RHEA:69695"/>
        <dbReference type="ChEBI" id="CHEBI:6746"/>
        <dbReference type="ChEBI" id="CHEBI:15378"/>
        <dbReference type="ChEBI" id="CHEBI:28869"/>
        <dbReference type="ChEBI" id="CHEBI:57540"/>
        <dbReference type="ChEBI" id="CHEBI:57945"/>
    </reaction>
    <physiologicalReaction direction="left-to-right" evidence="14">
        <dbReference type="Rhea" id="RHEA:69696"/>
    </physiologicalReaction>
</comment>
<comment type="cofactor">
    <cofactor evidence="3">
        <name>FAD</name>
        <dbReference type="ChEBI" id="CHEBI:57692"/>
    </cofactor>
</comment>
<comment type="biophysicochemical properties">
    <kinetics>
        <KM evidence="7">85 uM for NADH</KM>
        <KM evidence="7">39 uM for NADPH</KM>
        <KM evidence="8">110 uM for NADH</KM>
        <KM evidence="8">2.5 uM for menadione</KM>
        <KM evidence="8">840 uM for 5-(aziridin-1-yl)-2,4-dinitrobenzamide</KM>
        <Vmax evidence="8">2400.0 umol/min/mg enzyme toward menadione</Vmax>
        <Vmax evidence="8">140.0 nmol/min/mg enzyme toward 5-(aziridin-1-yl)-2,4-dinitrobenzamide</Vmax>
        <text evidence="7">kcat is 0.075 min(-1) NADH with as substrate. kcat is 0.074 min(-1) with NADPH as substrate.</text>
    </kinetics>
</comment>
<comment type="subunit">
    <text evidence="2 6">Homodimer (PubMed:7568029). Interacts with PDLIM4 isoform 2; this interaction stabilizes PDLIM4 isoform 2 in response to oxidative stress and protects it from ubiquitin-independent degradation by the core 20S proteasome (By similarity). Interacts with TP73 (via SAM domain); this interaction is NADH-dependent, stabilizes TP73 in response to oxidative stress and protects it from ubiquitin-independent degradation by the 20S proteasome (By similarity). Interacts with TP53; this interaction is NADH-dependent, stabilizes TP53 in response to oxidative stress and protects it from ubiquitin-independent degradation by the 20S proteasome (By similarity).</text>
</comment>
<comment type="subcellular location">
    <subcellularLocation>
        <location evidence="3">Cytoplasm</location>
        <location evidence="3">Cytosol</location>
    </subcellularLocation>
</comment>
<comment type="induction">
    <text>By polycyclic hydrocarbons (Governed by the aromatic hydrocarbon-responsive (AH) locus).</text>
</comment>
<comment type="miscellaneous">
    <text>Quinone reductase accepts electrons from both NADH and NADPH with equal efficiency.</text>
</comment>
<comment type="miscellaneous">
    <text>This protein is inhibited by dicoumarol.</text>
</comment>
<comment type="similarity">
    <text evidence="11">Belongs to the NAD(P)H dehydrogenase (quinone) family.</text>
</comment>
<comment type="caution">
    <text evidence="11">PubMed:2480957 sequence seems incorrectly to be attributed to a mouse sequence while it really seems to correspond to the rat sequence.</text>
</comment>
<comment type="sequence caution" evidence="11">
    <conflict type="erroneous initiation">
        <sequence resource="EMBL-CDS" id="AAA41988"/>
    </conflict>
</comment>
<feature type="initiator methionine" description="Removed" evidence="3 5">
    <location>
        <position position="1"/>
    </location>
</feature>
<feature type="chain" id="PRO_0000071625" description="NAD(P)H dehydrogenase [quinone] 1">
    <location>
        <begin position="2"/>
        <end position="274"/>
    </location>
</feature>
<feature type="region of interest" description="Important for apoenzyme conformational stability" evidence="2">
    <location>
        <begin position="225"/>
        <end position="274"/>
    </location>
</feature>
<feature type="binding site" evidence="6">
    <location>
        <position position="12"/>
    </location>
    <ligand>
        <name>FAD</name>
        <dbReference type="ChEBI" id="CHEBI:57692"/>
    </ligand>
</feature>
<feature type="binding site" evidence="6">
    <location>
        <begin position="18"/>
        <end position="19"/>
    </location>
    <ligand>
        <name>FAD</name>
        <dbReference type="ChEBI" id="CHEBI:57692"/>
    </ligand>
</feature>
<feature type="binding site" evidence="6">
    <location>
        <position position="67"/>
    </location>
    <ligand>
        <name>FAD</name>
        <dbReference type="ChEBI" id="CHEBI:57692"/>
    </ligand>
</feature>
<feature type="binding site" evidence="6">
    <location>
        <begin position="104"/>
        <end position="107"/>
    </location>
    <ligand>
        <name>FAD</name>
        <dbReference type="ChEBI" id="CHEBI:57692"/>
    </ligand>
</feature>
<feature type="binding site" evidence="1">
    <location>
        <begin position="126"/>
        <end position="128"/>
    </location>
    <ligand>
        <name>substrate</name>
    </ligand>
</feature>
<feature type="binding site" evidence="6">
    <location>
        <begin position="148"/>
        <end position="151"/>
    </location>
    <ligand>
        <name>FAD</name>
        <dbReference type="ChEBI" id="CHEBI:57692"/>
    </ligand>
</feature>
<feature type="binding site" evidence="6">
    <location>
        <position position="156"/>
    </location>
    <ligand>
        <name>FAD</name>
        <dbReference type="ChEBI" id="CHEBI:57692"/>
    </ligand>
</feature>
<feature type="binding site" evidence="6">
    <location>
        <position position="201"/>
    </location>
    <ligand>
        <name>FAD</name>
        <dbReference type="ChEBI" id="CHEBI:57692"/>
    </ligand>
</feature>
<feature type="modified residue" description="N-acetylalanine" evidence="5">
    <location>
        <position position="2"/>
    </location>
</feature>
<feature type="modified residue" description="Phosphoserine" evidence="2">
    <location>
        <position position="82"/>
    </location>
</feature>
<feature type="cross-link" description="Glycyl lysine isopeptide (Lys-Gly) (interchain with G-Cter in SUMO2)" evidence="2">
    <location>
        <position position="251"/>
    </location>
</feature>
<feature type="mutagenesis site" description="Decreases the catalytic efficiency toward menadione and nitrobenzene substrates." evidence="8">
    <original>Y</original>
    <variation>Q</variation>
    <location>
        <position position="105"/>
    </location>
</feature>
<feature type="mutagenesis site" description="Destroys enzyme activity." evidence="4">
    <original>FE</original>
    <variation>KK</variation>
    <location>
        <begin position="117"/>
        <end position="118"/>
    </location>
</feature>
<feature type="mutagenesis site" description="Decreases the catalytic efficiency toward menadione. Has no effect on the catalytic efficiency toward nitrobenzene substrate." evidence="8">
    <original>T</original>
    <variation>A</variation>
    <location>
        <position position="131"/>
    </location>
</feature>
<feature type="mutagenesis site" description="Destroys enzyme activity." evidence="4">
    <original>V</original>
    <variation>D</variation>
    <location>
        <position position="161"/>
    </location>
</feature>
<feature type="mutagenesis site" description="Destroys enzyme activity." evidence="4">
    <original>D</original>
    <variation>Q</variation>
    <location>
        <position position="164"/>
    </location>
</feature>
<feature type="mutagenesis site" description="Induces a very low catalytic efficiency." evidence="7">
    <original>H</original>
    <variation>A</variation>
    <location>
        <position position="195"/>
    </location>
</feature>
<feature type="mutagenesis site" description="Has no effect on the catalytic efficiency toward menadione and nitrobenzene substrates." evidence="8">
    <original>V</original>
    <variation>I</variation>
    <location>
        <position position="204"/>
    </location>
</feature>
<feature type="mutagenesis site" description="Has no effect on the catalytic efficiency toward menadione and nitrobenzene substrates." evidence="8">
    <original>S</original>
    <variation>T</variation>
    <location>
        <position position="219"/>
    </location>
</feature>
<feature type="mutagenesis site" description="Has no effect on the catalytic efficiency toward menadione. Slightly decreases the catalytic efficiency toward nitrobenzene substrate." evidence="8">
    <original>L</original>
    <variation>M</variation>
    <location>
        <position position="239"/>
    </location>
</feature>
<feature type="sequence conflict" description="In Ref. 9; AA sequence." evidence="11" ref="9">
    <location>
        <position position="31"/>
    </location>
</feature>
<feature type="sequence conflict" description="In Ref. 10; X17464." evidence="11" ref="10">
    <original>R</original>
    <variation>G</variation>
    <location>
        <position position="80"/>
    </location>
</feature>
<feature type="sequence conflict" description="In Ref. 3; AAA41988." evidence="11" ref="3">
    <original>K</original>
    <variation>Q</variation>
    <location>
        <position position="135"/>
    </location>
</feature>
<feature type="sequence conflict" description="In Ref. 9; AA sequence." evidence="11" ref="9">
    <original>W</original>
    <variation>E</variation>
    <location>
        <position position="216"/>
    </location>
</feature>
<feature type="sequence conflict" description="In Ref. 9; AA sequence." evidence="11" ref="9">
    <original>S</original>
    <variation>E</variation>
    <location>
        <position position="227"/>
    </location>
</feature>
<feature type="sequence conflict" description="In Ref. 9; AA sequence." evidence="11" ref="9">
    <original>S</original>
    <variation>I</variation>
    <location>
        <position position="263"/>
    </location>
</feature>
<feature type="sequence conflict" description="In Ref. 11; AA sequence." evidence="11" ref="11">
    <original>Q</original>
    <variation>E</variation>
    <location>
        <position position="269"/>
    </location>
</feature>
<feature type="strand" evidence="15">
    <location>
        <begin position="5"/>
        <end position="10"/>
    </location>
</feature>
<feature type="helix" evidence="15">
    <location>
        <begin position="18"/>
        <end position="32"/>
    </location>
</feature>
<feature type="strand" evidence="15">
    <location>
        <begin position="36"/>
        <end position="41"/>
    </location>
</feature>
<feature type="turn" evidence="15">
    <location>
        <begin position="42"/>
        <end position="46"/>
    </location>
</feature>
<feature type="helix" evidence="15">
    <location>
        <begin position="53"/>
        <end position="55"/>
    </location>
</feature>
<feature type="helix" evidence="15">
    <location>
        <begin position="68"/>
        <end position="78"/>
    </location>
</feature>
<feature type="helix" evidence="15">
    <location>
        <begin position="83"/>
        <end position="94"/>
    </location>
</feature>
<feature type="strand" evidence="15">
    <location>
        <begin position="96"/>
        <end position="103"/>
    </location>
</feature>
<feature type="helix" evidence="15">
    <location>
        <begin position="111"/>
        <end position="120"/>
    </location>
</feature>
<feature type="turn" evidence="15">
    <location>
        <begin position="123"/>
        <end position="125"/>
    </location>
</feature>
<feature type="helix" evidence="15">
    <location>
        <begin position="133"/>
        <end position="135"/>
    </location>
</feature>
<feature type="turn" evidence="15">
    <location>
        <begin position="137"/>
        <end position="140"/>
    </location>
</feature>
<feature type="strand" evidence="15">
    <location>
        <begin position="142"/>
        <end position="148"/>
    </location>
</feature>
<feature type="helix" evidence="15">
    <location>
        <begin position="153"/>
        <end position="156"/>
    </location>
</feature>
<feature type="helix" evidence="15">
    <location>
        <begin position="165"/>
        <end position="173"/>
    </location>
</feature>
<feature type="helix" evidence="15">
    <location>
        <begin position="174"/>
        <end position="178"/>
    </location>
</feature>
<feature type="turn" evidence="15">
    <location>
        <begin position="179"/>
        <end position="181"/>
    </location>
</feature>
<feature type="strand" evidence="15">
    <location>
        <begin position="188"/>
        <end position="190"/>
    </location>
</feature>
<feature type="helix" evidence="15">
    <location>
        <begin position="193"/>
        <end position="195"/>
    </location>
</feature>
<feature type="helix" evidence="15">
    <location>
        <begin position="198"/>
        <end position="212"/>
    </location>
</feature>
<feature type="helix" evidence="15">
    <location>
        <begin position="215"/>
        <end position="217"/>
    </location>
</feature>
<feature type="helix" evidence="15">
    <location>
        <begin position="226"/>
        <end position="228"/>
    </location>
</feature>
<feature type="turn" evidence="15">
    <location>
        <begin position="233"/>
        <end position="236"/>
    </location>
</feature>
<feature type="helix" evidence="15">
    <location>
        <begin position="241"/>
        <end position="247"/>
    </location>
</feature>
<feature type="strand" evidence="15">
    <location>
        <begin position="254"/>
        <end position="256"/>
    </location>
</feature>
<feature type="turn" evidence="15">
    <location>
        <begin position="266"/>
        <end position="270"/>
    </location>
</feature>
<dbReference type="EC" id="1.6.5.2" evidence="3 7 8"/>
<dbReference type="EMBL" id="J02608">
    <property type="protein sequence ID" value="AAA41716.1"/>
    <property type="molecule type" value="mRNA"/>
</dbReference>
<dbReference type="EMBL" id="J02679">
    <property type="protein sequence ID" value="AAA41715.1"/>
    <property type="molecule type" value="mRNA"/>
</dbReference>
<dbReference type="EMBL" id="M36660">
    <property type="protein sequence ID" value="AAA39829.1"/>
    <property type="molecule type" value="mRNA"/>
</dbReference>
<dbReference type="EMBL" id="J02640">
    <property type="protein sequence ID" value="AAA41988.1"/>
    <property type="status" value="ALT_INIT"/>
    <property type="molecule type" value="mRNA"/>
</dbReference>
<dbReference type="EMBL" id="M31805">
    <property type="protein sequence ID" value="AAA41989.1"/>
    <property type="molecule type" value="Genomic_DNA"/>
</dbReference>
<dbReference type="EMBL" id="M31801">
    <property type="protein sequence ID" value="AAA41989.1"/>
    <property type="status" value="JOINED"/>
    <property type="molecule type" value="Genomic_DNA"/>
</dbReference>
<dbReference type="EMBL" id="M31802">
    <property type="protein sequence ID" value="AAA41989.1"/>
    <property type="status" value="JOINED"/>
    <property type="molecule type" value="Genomic_DNA"/>
</dbReference>
<dbReference type="EMBL" id="M31804">
    <property type="protein sequence ID" value="AAA41989.1"/>
    <property type="status" value="JOINED"/>
    <property type="molecule type" value="Genomic_DNA"/>
</dbReference>
<dbReference type="EMBL" id="M33039">
    <property type="protein sequence ID" value="AAA41990.1"/>
    <property type="molecule type" value="Genomic_DNA"/>
</dbReference>
<dbReference type="EMBL" id="M33038">
    <property type="protein sequence ID" value="AAA41990.1"/>
    <property type="status" value="JOINED"/>
    <property type="molecule type" value="Genomic_DNA"/>
</dbReference>
<dbReference type="EMBL" id="BC083542">
    <property type="protein sequence ID" value="AAH83542.1"/>
    <property type="molecule type" value="mRNA"/>
</dbReference>
<dbReference type="EMBL" id="X17464">
    <property type="status" value="NOT_ANNOTATED_CDS"/>
    <property type="molecule type" value="mRNA"/>
</dbReference>
<dbReference type="PIR" id="A34162">
    <property type="entry name" value="A34162"/>
</dbReference>
<dbReference type="RefSeq" id="NP_058696.2">
    <property type="nucleotide sequence ID" value="NM_017000.3"/>
</dbReference>
<dbReference type="PDB" id="1QRD">
    <property type="method" value="X-ray"/>
    <property type="resolution" value="2.40 A"/>
    <property type="chains" value="A/B=2-274"/>
</dbReference>
<dbReference type="PDBsum" id="1QRD"/>
<dbReference type="SMR" id="P05982"/>
<dbReference type="FunCoup" id="P05982">
    <property type="interactions" value="253"/>
</dbReference>
<dbReference type="IntAct" id="P05982">
    <property type="interactions" value="2"/>
</dbReference>
<dbReference type="STRING" id="10116.ENSRNOP00000017175"/>
<dbReference type="BindingDB" id="P05982"/>
<dbReference type="ChEMBL" id="CHEMBL3091269"/>
<dbReference type="DrugCentral" id="P05982"/>
<dbReference type="iPTMnet" id="P05982"/>
<dbReference type="PhosphoSitePlus" id="P05982"/>
<dbReference type="jPOST" id="P05982"/>
<dbReference type="PaxDb" id="10116-ENSRNOP00000017175"/>
<dbReference type="Ensembl" id="ENSRNOT00000112166.1">
    <property type="protein sequence ID" value="ENSRNOP00000082814.1"/>
    <property type="gene ID" value="ENSRNOG00000012772.6"/>
</dbReference>
<dbReference type="GeneID" id="24314"/>
<dbReference type="KEGG" id="rno:24314"/>
<dbReference type="UCSC" id="RGD:2503">
    <property type="organism name" value="rat"/>
</dbReference>
<dbReference type="AGR" id="RGD:2503"/>
<dbReference type="CTD" id="1728"/>
<dbReference type="RGD" id="2503">
    <property type="gene designation" value="Nqo1"/>
</dbReference>
<dbReference type="eggNOG" id="ENOG502QQMI">
    <property type="taxonomic scope" value="Eukaryota"/>
</dbReference>
<dbReference type="GeneTree" id="ENSGT00940000159150"/>
<dbReference type="HOGENOM" id="CLU_058643_2_0_1"/>
<dbReference type="InParanoid" id="P05982"/>
<dbReference type="OMA" id="HGILHYP"/>
<dbReference type="OrthoDB" id="26889at2759"/>
<dbReference type="PhylomeDB" id="P05982"/>
<dbReference type="TreeFam" id="TF300296"/>
<dbReference type="BRENDA" id="1.6.5.2">
    <property type="organism ID" value="5301"/>
</dbReference>
<dbReference type="Reactome" id="R-RNO-350562">
    <property type="pathway name" value="Regulation of ornithine decarboxylase (ODC)"/>
</dbReference>
<dbReference type="EvolutionaryTrace" id="P05982"/>
<dbReference type="PRO" id="PR:P05982"/>
<dbReference type="Proteomes" id="UP000002494">
    <property type="component" value="Chromosome 19"/>
</dbReference>
<dbReference type="Bgee" id="ENSRNOG00000012772">
    <property type="expression patterns" value="Expressed in stomach and 20 other cell types or tissues"/>
</dbReference>
<dbReference type="GO" id="GO:0005737">
    <property type="term" value="C:cytoplasm"/>
    <property type="evidence" value="ECO:0000266"/>
    <property type="project" value="RGD"/>
</dbReference>
<dbReference type="GO" id="GO:0005829">
    <property type="term" value="C:cytosol"/>
    <property type="evidence" value="ECO:0000266"/>
    <property type="project" value="RGD"/>
</dbReference>
<dbReference type="GO" id="GO:0030425">
    <property type="term" value="C:dendrite"/>
    <property type="evidence" value="ECO:0000314"/>
    <property type="project" value="RGD"/>
</dbReference>
<dbReference type="GO" id="GO:0043025">
    <property type="term" value="C:neuronal cell body"/>
    <property type="evidence" value="ECO:0000314"/>
    <property type="project" value="RGD"/>
</dbReference>
<dbReference type="GO" id="GO:0005634">
    <property type="term" value="C:nucleus"/>
    <property type="evidence" value="ECO:0000266"/>
    <property type="project" value="RGD"/>
</dbReference>
<dbReference type="GO" id="GO:0042802">
    <property type="term" value="F:identical protein binding"/>
    <property type="evidence" value="ECO:0000266"/>
    <property type="project" value="RGD"/>
</dbReference>
<dbReference type="GO" id="GO:0003955">
    <property type="term" value="F:NAD(P)H dehydrogenase (quinone) activity"/>
    <property type="evidence" value="ECO:0000314"/>
    <property type="project" value="RGD"/>
</dbReference>
<dbReference type="GO" id="GO:0050136">
    <property type="term" value="F:NADH:ubiquinone reductase (non-electrogenic) activity"/>
    <property type="evidence" value="ECO:0000314"/>
    <property type="project" value="UniProtKB"/>
</dbReference>
<dbReference type="GO" id="GO:0008753">
    <property type="term" value="F:NADPH dehydrogenase (quinone) activity"/>
    <property type="evidence" value="ECO:0007669"/>
    <property type="project" value="RHEA"/>
</dbReference>
<dbReference type="GO" id="GO:0004784">
    <property type="term" value="F:superoxide dismutase activity"/>
    <property type="evidence" value="ECO:0000315"/>
    <property type="project" value="RGD"/>
</dbReference>
<dbReference type="GO" id="GO:0045454">
    <property type="term" value="P:cell redox homeostasis"/>
    <property type="evidence" value="ECO:0000266"/>
    <property type="project" value="RGD"/>
</dbReference>
<dbReference type="GO" id="GO:0070301">
    <property type="term" value="P:cellular response to hydrogen peroxide"/>
    <property type="evidence" value="ECO:0000314"/>
    <property type="project" value="RGD"/>
</dbReference>
<dbReference type="GO" id="GO:0071248">
    <property type="term" value="P:cellular response to metal ion"/>
    <property type="evidence" value="ECO:0000270"/>
    <property type="project" value="RGD"/>
</dbReference>
<dbReference type="GO" id="GO:0034599">
    <property type="term" value="P:cellular response to oxidative stress"/>
    <property type="evidence" value="ECO:0000266"/>
    <property type="project" value="RGD"/>
</dbReference>
<dbReference type="GO" id="GO:0045087">
    <property type="term" value="P:innate immune response"/>
    <property type="evidence" value="ECO:0000266"/>
    <property type="project" value="RGD"/>
</dbReference>
<dbReference type="GO" id="GO:0043066">
    <property type="term" value="P:negative regulation of apoptotic process"/>
    <property type="evidence" value="ECO:0000314"/>
    <property type="project" value="RGD"/>
</dbReference>
<dbReference type="GO" id="GO:0110076">
    <property type="term" value="P:negative regulation of ferroptosis"/>
    <property type="evidence" value="ECO:0000250"/>
    <property type="project" value="UniProtKB"/>
</dbReference>
<dbReference type="GO" id="GO:0042177">
    <property type="term" value="P:negative regulation of protein catabolic process"/>
    <property type="evidence" value="ECO:0000250"/>
    <property type="project" value="UniProtKB"/>
</dbReference>
<dbReference type="GO" id="GO:0043525">
    <property type="term" value="P:positive regulation of neuron apoptotic process"/>
    <property type="evidence" value="ECO:0000315"/>
    <property type="project" value="RGD"/>
</dbReference>
<dbReference type="GO" id="GO:0030163">
    <property type="term" value="P:protein catabolic process"/>
    <property type="evidence" value="ECO:0000266"/>
    <property type="project" value="RGD"/>
</dbReference>
<dbReference type="GO" id="GO:0000209">
    <property type="term" value="P:protein polyubiquitination"/>
    <property type="evidence" value="ECO:0000266"/>
    <property type="project" value="RGD"/>
</dbReference>
<dbReference type="GO" id="GO:0019430">
    <property type="term" value="P:removal of superoxide radicals"/>
    <property type="evidence" value="ECO:0000250"/>
    <property type="project" value="UniProtKB"/>
</dbReference>
<dbReference type="GO" id="GO:0043279">
    <property type="term" value="P:response to alkaloid"/>
    <property type="evidence" value="ECO:0000270"/>
    <property type="project" value="RGD"/>
</dbReference>
<dbReference type="GO" id="GO:0014075">
    <property type="term" value="P:response to amine"/>
    <property type="evidence" value="ECO:0000314"/>
    <property type="project" value="RGD"/>
</dbReference>
<dbReference type="GO" id="GO:0009743">
    <property type="term" value="P:response to carbohydrate"/>
    <property type="evidence" value="ECO:0000270"/>
    <property type="project" value="RGD"/>
</dbReference>
<dbReference type="GO" id="GO:0051602">
    <property type="term" value="P:response to electrical stimulus"/>
    <property type="evidence" value="ECO:0000270"/>
    <property type="project" value="RGD"/>
</dbReference>
<dbReference type="GO" id="GO:0032355">
    <property type="term" value="P:response to estradiol"/>
    <property type="evidence" value="ECO:0000270"/>
    <property type="project" value="RGD"/>
</dbReference>
<dbReference type="GO" id="GO:0045471">
    <property type="term" value="P:response to ethanol"/>
    <property type="evidence" value="ECO:0000270"/>
    <property type="project" value="RGD"/>
</dbReference>
<dbReference type="GO" id="GO:1905395">
    <property type="term" value="P:response to flavonoid"/>
    <property type="evidence" value="ECO:0000270"/>
    <property type="project" value="RGD"/>
</dbReference>
<dbReference type="GO" id="GO:0009725">
    <property type="term" value="P:response to hormone"/>
    <property type="evidence" value="ECO:0000270"/>
    <property type="project" value="RGD"/>
</dbReference>
<dbReference type="GO" id="GO:1904880">
    <property type="term" value="P:response to hydrogen sulfide"/>
    <property type="evidence" value="ECO:0000270"/>
    <property type="project" value="RGD"/>
</dbReference>
<dbReference type="GO" id="GO:0002931">
    <property type="term" value="P:response to ischemia"/>
    <property type="evidence" value="ECO:0000270"/>
    <property type="project" value="RGD"/>
</dbReference>
<dbReference type="GO" id="GO:1904844">
    <property type="term" value="P:response to L-glutamine"/>
    <property type="evidence" value="ECO:0000314"/>
    <property type="project" value="RGD"/>
</dbReference>
<dbReference type="GO" id="GO:0032496">
    <property type="term" value="P:response to lipopolysaccharide"/>
    <property type="evidence" value="ECO:0000266"/>
    <property type="project" value="RGD"/>
</dbReference>
<dbReference type="GO" id="GO:0007584">
    <property type="term" value="P:response to nutrient"/>
    <property type="evidence" value="ECO:0000270"/>
    <property type="project" value="RGD"/>
</dbReference>
<dbReference type="GO" id="GO:0006979">
    <property type="term" value="P:response to oxidative stress"/>
    <property type="evidence" value="ECO:0000270"/>
    <property type="project" value="RGD"/>
</dbReference>
<dbReference type="GO" id="GO:0033574">
    <property type="term" value="P:response to testosterone"/>
    <property type="evidence" value="ECO:0000270"/>
    <property type="project" value="RGD"/>
</dbReference>
<dbReference type="GO" id="GO:1904772">
    <property type="term" value="P:response to tetrachloromethane"/>
    <property type="evidence" value="ECO:0000270"/>
    <property type="project" value="RGD"/>
</dbReference>
<dbReference type="GO" id="GO:0009410">
    <property type="term" value="P:response to xenobiotic stimulus"/>
    <property type="evidence" value="ECO:0000314"/>
    <property type="project" value="RGD"/>
</dbReference>
<dbReference type="GO" id="GO:0006801">
    <property type="term" value="P:superoxide metabolic process"/>
    <property type="evidence" value="ECO:0000315"/>
    <property type="project" value="RGD"/>
</dbReference>
<dbReference type="GO" id="GO:0006743">
    <property type="term" value="P:ubiquinone metabolic process"/>
    <property type="evidence" value="ECO:0000250"/>
    <property type="project" value="UniProtKB"/>
</dbReference>
<dbReference type="GO" id="GO:0042360">
    <property type="term" value="P:vitamin E metabolic process"/>
    <property type="evidence" value="ECO:0000250"/>
    <property type="project" value="UniProtKB"/>
</dbReference>
<dbReference type="GO" id="GO:0042373">
    <property type="term" value="P:vitamin K metabolic process"/>
    <property type="evidence" value="ECO:0000314"/>
    <property type="project" value="UniProtKB"/>
</dbReference>
<dbReference type="FunFam" id="3.40.50.360:FF:000029">
    <property type="entry name" value="NAD(P)H dehydrogenase [quinone] 1"/>
    <property type="match status" value="1"/>
</dbReference>
<dbReference type="Gene3D" id="3.40.50.360">
    <property type="match status" value="1"/>
</dbReference>
<dbReference type="InterPro" id="IPR003680">
    <property type="entry name" value="Flavodoxin_fold"/>
</dbReference>
<dbReference type="InterPro" id="IPR029039">
    <property type="entry name" value="Flavoprotein-like_sf"/>
</dbReference>
<dbReference type="InterPro" id="IPR051545">
    <property type="entry name" value="NAD(P)H_dehydrogenase_qn"/>
</dbReference>
<dbReference type="PANTHER" id="PTHR10204">
    <property type="entry name" value="NAD P H OXIDOREDUCTASE-RELATED"/>
    <property type="match status" value="1"/>
</dbReference>
<dbReference type="PANTHER" id="PTHR10204:SF1">
    <property type="entry name" value="NAD(P)H DEHYDROGENASE [QUINONE] 1"/>
    <property type="match status" value="1"/>
</dbReference>
<dbReference type="Pfam" id="PF02525">
    <property type="entry name" value="Flavodoxin_2"/>
    <property type="match status" value="1"/>
</dbReference>
<dbReference type="SUPFAM" id="SSF52218">
    <property type="entry name" value="Flavoproteins"/>
    <property type="match status" value="1"/>
</dbReference>